<gene>
    <name evidence="1" type="primary">rimP</name>
    <name type="ordered locus">Tgr7_1001</name>
</gene>
<proteinExistence type="inferred from homology"/>
<keyword id="KW-0963">Cytoplasm</keyword>
<keyword id="KW-1185">Reference proteome</keyword>
<keyword id="KW-0690">Ribosome biogenesis</keyword>
<name>RIMP_THISH</name>
<evidence type="ECO:0000255" key="1">
    <source>
        <dbReference type="HAMAP-Rule" id="MF_01077"/>
    </source>
</evidence>
<comment type="function">
    <text evidence="1">Required for maturation of 30S ribosomal subunits.</text>
</comment>
<comment type="subcellular location">
    <subcellularLocation>
        <location evidence="1">Cytoplasm</location>
    </subcellularLocation>
</comment>
<comment type="similarity">
    <text evidence="1">Belongs to the RimP family.</text>
</comment>
<protein>
    <recommendedName>
        <fullName evidence="1">Ribosome maturation factor RimP</fullName>
    </recommendedName>
</protein>
<organism>
    <name type="scientific">Thioalkalivibrio sulfidiphilus (strain HL-EbGR7)</name>
    <dbReference type="NCBI Taxonomy" id="396588"/>
    <lineage>
        <taxon>Bacteria</taxon>
        <taxon>Pseudomonadati</taxon>
        <taxon>Pseudomonadota</taxon>
        <taxon>Gammaproteobacteria</taxon>
        <taxon>Chromatiales</taxon>
        <taxon>Ectothiorhodospiraceae</taxon>
        <taxon>Thioalkalivibrio</taxon>
    </lineage>
</organism>
<dbReference type="EMBL" id="CP001339">
    <property type="protein sequence ID" value="ACL72089.1"/>
    <property type="molecule type" value="Genomic_DNA"/>
</dbReference>
<dbReference type="RefSeq" id="WP_012637573.1">
    <property type="nucleotide sequence ID" value="NC_011901.1"/>
</dbReference>
<dbReference type="SMR" id="B8GP00"/>
<dbReference type="STRING" id="396588.Tgr7_1001"/>
<dbReference type="KEGG" id="tgr:Tgr7_1001"/>
<dbReference type="eggNOG" id="COG0779">
    <property type="taxonomic scope" value="Bacteria"/>
</dbReference>
<dbReference type="HOGENOM" id="CLU_070525_1_1_6"/>
<dbReference type="OrthoDB" id="9805006at2"/>
<dbReference type="Proteomes" id="UP000002383">
    <property type="component" value="Chromosome"/>
</dbReference>
<dbReference type="GO" id="GO:0005829">
    <property type="term" value="C:cytosol"/>
    <property type="evidence" value="ECO:0007669"/>
    <property type="project" value="TreeGrafter"/>
</dbReference>
<dbReference type="GO" id="GO:0000028">
    <property type="term" value="P:ribosomal small subunit assembly"/>
    <property type="evidence" value="ECO:0007669"/>
    <property type="project" value="TreeGrafter"/>
</dbReference>
<dbReference type="GO" id="GO:0006412">
    <property type="term" value="P:translation"/>
    <property type="evidence" value="ECO:0007669"/>
    <property type="project" value="TreeGrafter"/>
</dbReference>
<dbReference type="CDD" id="cd01734">
    <property type="entry name" value="YlxS_C"/>
    <property type="match status" value="1"/>
</dbReference>
<dbReference type="FunFam" id="3.30.300.70:FF:000001">
    <property type="entry name" value="Ribosome maturation factor RimP"/>
    <property type="match status" value="1"/>
</dbReference>
<dbReference type="Gene3D" id="2.30.30.180">
    <property type="entry name" value="Ribosome maturation factor RimP, C-terminal domain"/>
    <property type="match status" value="1"/>
</dbReference>
<dbReference type="Gene3D" id="3.30.300.70">
    <property type="entry name" value="RimP-like superfamily, N-terminal"/>
    <property type="match status" value="1"/>
</dbReference>
<dbReference type="HAMAP" id="MF_01077">
    <property type="entry name" value="RimP"/>
    <property type="match status" value="1"/>
</dbReference>
<dbReference type="InterPro" id="IPR003728">
    <property type="entry name" value="Ribosome_maturation_RimP"/>
</dbReference>
<dbReference type="InterPro" id="IPR028998">
    <property type="entry name" value="RimP_C"/>
</dbReference>
<dbReference type="InterPro" id="IPR036847">
    <property type="entry name" value="RimP_C_sf"/>
</dbReference>
<dbReference type="InterPro" id="IPR028989">
    <property type="entry name" value="RimP_N"/>
</dbReference>
<dbReference type="InterPro" id="IPR035956">
    <property type="entry name" value="RimP_N_sf"/>
</dbReference>
<dbReference type="NCBIfam" id="NF000927">
    <property type="entry name" value="PRK00092.1-1"/>
    <property type="match status" value="1"/>
</dbReference>
<dbReference type="PANTHER" id="PTHR33867">
    <property type="entry name" value="RIBOSOME MATURATION FACTOR RIMP"/>
    <property type="match status" value="1"/>
</dbReference>
<dbReference type="PANTHER" id="PTHR33867:SF1">
    <property type="entry name" value="RIBOSOME MATURATION FACTOR RIMP"/>
    <property type="match status" value="1"/>
</dbReference>
<dbReference type="Pfam" id="PF17384">
    <property type="entry name" value="DUF150_C"/>
    <property type="match status" value="1"/>
</dbReference>
<dbReference type="Pfam" id="PF02576">
    <property type="entry name" value="RimP_N"/>
    <property type="match status" value="1"/>
</dbReference>
<dbReference type="SUPFAM" id="SSF74942">
    <property type="entry name" value="YhbC-like, C-terminal domain"/>
    <property type="match status" value="1"/>
</dbReference>
<dbReference type="SUPFAM" id="SSF75420">
    <property type="entry name" value="YhbC-like, N-terminal domain"/>
    <property type="match status" value="1"/>
</dbReference>
<sequence length="154" mass="17201">MQLKALLEPLVTRMGYQLWGMEFRVAKHSALLRLFIDSEQGITLDDCTEVSRQVSALMDVEDPIQVPYTLEVSSPGVDRPLFEAGQYARYVGEQVRVRTQWPIDGQRNFAGAIVSADEDSVTLDVDGREVRLPLEAIARGRLKGTLPPATQVEE</sequence>
<reference key="1">
    <citation type="journal article" date="2011" name="Stand. Genomic Sci.">
        <title>Complete genome sequence of 'Thioalkalivibrio sulfidophilus' HL-EbGr7.</title>
        <authorList>
            <person name="Muyzer G."/>
            <person name="Sorokin D.Y."/>
            <person name="Mavromatis K."/>
            <person name="Lapidus A."/>
            <person name="Clum A."/>
            <person name="Ivanova N."/>
            <person name="Pati A."/>
            <person name="d'Haeseleer P."/>
            <person name="Woyke T."/>
            <person name="Kyrpides N.C."/>
        </authorList>
    </citation>
    <scope>NUCLEOTIDE SEQUENCE [LARGE SCALE GENOMIC DNA]</scope>
    <source>
        <strain>HL-EbGR7</strain>
    </source>
</reference>
<accession>B8GP00</accession>
<feature type="chain" id="PRO_0000384800" description="Ribosome maturation factor RimP">
    <location>
        <begin position="1"/>
        <end position="154"/>
    </location>
</feature>